<sequence>MKLKIGIIGAMAQEIEILRKLMTDVSVLEIAGCKIYEGKINNTCVSLLQSGIGKVSAAMGTTLLLELTKPNMVINTGSAGGLAENLNVGDIVISTEVRHYDVDVTAFGYEIGQLPANPAAFLPNEQLVNMALKETKTAGVNAVAGLICSGDRFVNGAEQITTIRQHFDQVVAVEMEAAAIAQVCYAFEVPFVVVRAISDIADKCSHLSFEEFLPLAAEKSSEIVIAMLNNFS</sequence>
<protein>
    <recommendedName>
        <fullName evidence="1">5'-methylthioadenosine/S-adenosylhomocysteine nucleosidase</fullName>
        <shortName evidence="1">MTA/SAH nucleosidase</shortName>
        <shortName evidence="1">MTAN</shortName>
        <ecNumber evidence="1">3.2.2.9</ecNumber>
    </recommendedName>
    <alternativeName>
        <fullName evidence="1">5'-deoxyadenosine nucleosidase</fullName>
        <shortName evidence="1">DOA nucleosidase</shortName>
        <shortName evidence="1">dAdo nucleosidase</shortName>
    </alternativeName>
    <alternativeName>
        <fullName evidence="1">5'-methylthioadenosine nucleosidase</fullName>
        <shortName evidence="1">MTA nucleosidase</shortName>
    </alternativeName>
    <alternativeName>
        <fullName evidence="1">S-adenosylhomocysteine nucleosidase</fullName>
        <shortName evidence="1">AdoHcy nucleosidase</shortName>
        <shortName evidence="1">SAH nucleosidase</shortName>
        <shortName evidence="1">SRH nucleosidase</shortName>
    </alternativeName>
</protein>
<feature type="chain" id="PRO_0000359304" description="5'-methylthioadenosine/S-adenosylhomocysteine nucleosidase">
    <location>
        <begin position="1"/>
        <end position="232"/>
    </location>
</feature>
<feature type="active site" description="Proton acceptor" evidence="1">
    <location>
        <position position="14"/>
    </location>
</feature>
<feature type="active site" description="Proton donor" evidence="1">
    <location>
        <position position="199"/>
    </location>
</feature>
<feature type="binding site" evidence="1">
    <location>
        <position position="80"/>
    </location>
    <ligand>
        <name>substrate</name>
    </ligand>
</feature>
<feature type="binding site" evidence="1">
    <location>
        <position position="154"/>
    </location>
    <ligand>
        <name>substrate</name>
    </ligand>
</feature>
<feature type="binding site" evidence="1">
    <location>
        <begin position="175"/>
        <end position="176"/>
    </location>
    <ligand>
        <name>substrate</name>
    </ligand>
</feature>
<reference key="1">
    <citation type="submission" date="2003-06" db="EMBL/GenBank/DDBJ databases">
        <title>The complete genome sequence of Haemophilus ducreyi.</title>
        <authorList>
            <person name="Munson R.S. Jr."/>
            <person name="Ray W.C."/>
            <person name="Mahairas G."/>
            <person name="Sabo P."/>
            <person name="Mungur R."/>
            <person name="Johnson L."/>
            <person name="Nguyen D."/>
            <person name="Wang J."/>
            <person name="Forst C."/>
            <person name="Hood L."/>
        </authorList>
    </citation>
    <scope>NUCLEOTIDE SEQUENCE [LARGE SCALE GENOMIC DNA]</scope>
    <source>
        <strain>35000HP / ATCC 700724</strain>
    </source>
</reference>
<name>MTNN_HAEDU</name>
<accession>Q7VKK0</accession>
<organism>
    <name type="scientific">Haemophilus ducreyi (strain 35000HP / ATCC 700724)</name>
    <dbReference type="NCBI Taxonomy" id="233412"/>
    <lineage>
        <taxon>Bacteria</taxon>
        <taxon>Pseudomonadati</taxon>
        <taxon>Pseudomonadota</taxon>
        <taxon>Gammaproteobacteria</taxon>
        <taxon>Pasteurellales</taxon>
        <taxon>Pasteurellaceae</taxon>
        <taxon>Haemophilus</taxon>
    </lineage>
</organism>
<comment type="function">
    <text evidence="1">Catalyzes the irreversible cleavage of the glycosidic bond in both 5'-methylthioadenosine (MTA) and S-adenosylhomocysteine (SAH/AdoHcy) to adenine and the corresponding thioribose, 5'-methylthioribose and S-ribosylhomocysteine, respectively. Also cleaves 5'-deoxyadenosine, a toxic by-product of radical S-adenosylmethionine (SAM) enzymes, into 5-deoxyribose and adenine.</text>
</comment>
<comment type="catalytic activity">
    <reaction evidence="1">
        <text>S-adenosyl-L-homocysteine + H2O = S-(5-deoxy-D-ribos-5-yl)-L-homocysteine + adenine</text>
        <dbReference type="Rhea" id="RHEA:17805"/>
        <dbReference type="ChEBI" id="CHEBI:15377"/>
        <dbReference type="ChEBI" id="CHEBI:16708"/>
        <dbReference type="ChEBI" id="CHEBI:57856"/>
        <dbReference type="ChEBI" id="CHEBI:58195"/>
        <dbReference type="EC" id="3.2.2.9"/>
    </reaction>
</comment>
<comment type="catalytic activity">
    <reaction evidence="1">
        <text>S-methyl-5'-thioadenosine + H2O = 5-(methylsulfanyl)-D-ribose + adenine</text>
        <dbReference type="Rhea" id="RHEA:13617"/>
        <dbReference type="ChEBI" id="CHEBI:15377"/>
        <dbReference type="ChEBI" id="CHEBI:16708"/>
        <dbReference type="ChEBI" id="CHEBI:17509"/>
        <dbReference type="ChEBI" id="CHEBI:78440"/>
        <dbReference type="EC" id="3.2.2.9"/>
    </reaction>
</comment>
<comment type="catalytic activity">
    <reaction evidence="1">
        <text>5'-deoxyadenosine + H2O = 5-deoxy-D-ribose + adenine</text>
        <dbReference type="Rhea" id="RHEA:29859"/>
        <dbReference type="ChEBI" id="CHEBI:15377"/>
        <dbReference type="ChEBI" id="CHEBI:16708"/>
        <dbReference type="ChEBI" id="CHEBI:17319"/>
        <dbReference type="ChEBI" id="CHEBI:149540"/>
        <dbReference type="EC" id="3.2.2.9"/>
    </reaction>
    <physiologicalReaction direction="left-to-right" evidence="1">
        <dbReference type="Rhea" id="RHEA:29860"/>
    </physiologicalReaction>
</comment>
<comment type="pathway">
    <text evidence="1">Amino-acid biosynthesis; L-methionine biosynthesis via salvage pathway; S-methyl-5-thio-alpha-D-ribose 1-phosphate from S-methyl-5'-thioadenosine (hydrolase route): step 1/2.</text>
</comment>
<comment type="similarity">
    <text evidence="1">Belongs to the PNP/UDP phosphorylase family. MtnN subfamily.</text>
</comment>
<proteinExistence type="inferred from homology"/>
<dbReference type="EC" id="3.2.2.9" evidence="1"/>
<dbReference type="EMBL" id="AE017143">
    <property type="protein sequence ID" value="AAP96627.1"/>
    <property type="molecule type" value="Genomic_DNA"/>
</dbReference>
<dbReference type="RefSeq" id="WP_010945655.1">
    <property type="nucleotide sequence ID" value="NC_002940.2"/>
</dbReference>
<dbReference type="SMR" id="Q7VKK0"/>
<dbReference type="STRING" id="233412.HD_1898"/>
<dbReference type="KEGG" id="hdu:HD_1898"/>
<dbReference type="eggNOG" id="COG0775">
    <property type="taxonomic scope" value="Bacteria"/>
</dbReference>
<dbReference type="HOGENOM" id="CLU_031248_2_2_6"/>
<dbReference type="OrthoDB" id="9792278at2"/>
<dbReference type="UniPathway" id="UPA00904">
    <property type="reaction ID" value="UER00871"/>
</dbReference>
<dbReference type="Proteomes" id="UP000001022">
    <property type="component" value="Chromosome"/>
</dbReference>
<dbReference type="GO" id="GO:0005829">
    <property type="term" value="C:cytosol"/>
    <property type="evidence" value="ECO:0007669"/>
    <property type="project" value="TreeGrafter"/>
</dbReference>
<dbReference type="GO" id="GO:0008782">
    <property type="term" value="F:adenosylhomocysteine nucleosidase activity"/>
    <property type="evidence" value="ECO:0007669"/>
    <property type="project" value="UniProtKB-UniRule"/>
</dbReference>
<dbReference type="GO" id="GO:0008930">
    <property type="term" value="F:methylthioadenosine nucleosidase activity"/>
    <property type="evidence" value="ECO:0007669"/>
    <property type="project" value="UniProtKB-UniRule"/>
</dbReference>
<dbReference type="GO" id="GO:0019509">
    <property type="term" value="P:L-methionine salvage from methylthioadenosine"/>
    <property type="evidence" value="ECO:0007669"/>
    <property type="project" value="UniProtKB-UniRule"/>
</dbReference>
<dbReference type="GO" id="GO:0019284">
    <property type="term" value="P:L-methionine salvage from S-adenosylmethionine"/>
    <property type="evidence" value="ECO:0007669"/>
    <property type="project" value="TreeGrafter"/>
</dbReference>
<dbReference type="GO" id="GO:0009164">
    <property type="term" value="P:nucleoside catabolic process"/>
    <property type="evidence" value="ECO:0007669"/>
    <property type="project" value="InterPro"/>
</dbReference>
<dbReference type="CDD" id="cd09008">
    <property type="entry name" value="MTAN"/>
    <property type="match status" value="1"/>
</dbReference>
<dbReference type="FunFam" id="3.40.50.1580:FF:000001">
    <property type="entry name" value="MTA/SAH nucleosidase family protein"/>
    <property type="match status" value="1"/>
</dbReference>
<dbReference type="Gene3D" id="3.40.50.1580">
    <property type="entry name" value="Nucleoside phosphorylase domain"/>
    <property type="match status" value="1"/>
</dbReference>
<dbReference type="HAMAP" id="MF_01684">
    <property type="entry name" value="Salvage_MtnN"/>
    <property type="match status" value="1"/>
</dbReference>
<dbReference type="InterPro" id="IPR010049">
    <property type="entry name" value="MTA_SAH_Nsdase"/>
</dbReference>
<dbReference type="InterPro" id="IPR000845">
    <property type="entry name" value="Nucleoside_phosphorylase_d"/>
</dbReference>
<dbReference type="InterPro" id="IPR035994">
    <property type="entry name" value="Nucleoside_phosphorylase_sf"/>
</dbReference>
<dbReference type="NCBIfam" id="TIGR01704">
    <property type="entry name" value="MTA_SAH-Nsdase"/>
    <property type="match status" value="1"/>
</dbReference>
<dbReference type="NCBIfam" id="NF004079">
    <property type="entry name" value="PRK05584.1"/>
    <property type="match status" value="1"/>
</dbReference>
<dbReference type="PANTHER" id="PTHR46832">
    <property type="entry name" value="5'-METHYLTHIOADENOSINE/S-ADENOSYLHOMOCYSTEINE NUCLEOSIDASE"/>
    <property type="match status" value="1"/>
</dbReference>
<dbReference type="PANTHER" id="PTHR46832:SF1">
    <property type="entry name" value="5'-METHYLTHIOADENOSINE_S-ADENOSYLHOMOCYSTEINE NUCLEOSIDASE"/>
    <property type="match status" value="1"/>
</dbReference>
<dbReference type="Pfam" id="PF01048">
    <property type="entry name" value="PNP_UDP_1"/>
    <property type="match status" value="1"/>
</dbReference>
<dbReference type="SUPFAM" id="SSF53167">
    <property type="entry name" value="Purine and uridine phosphorylases"/>
    <property type="match status" value="1"/>
</dbReference>
<gene>
    <name evidence="1" type="primary">mtnN</name>
    <name type="ordered locus">HD_1898</name>
</gene>
<evidence type="ECO:0000255" key="1">
    <source>
        <dbReference type="HAMAP-Rule" id="MF_01684"/>
    </source>
</evidence>
<keyword id="KW-0028">Amino-acid biosynthesis</keyword>
<keyword id="KW-0378">Hydrolase</keyword>
<keyword id="KW-0486">Methionine biosynthesis</keyword>
<keyword id="KW-1185">Reference proteome</keyword>